<comment type="similarity">
    <text evidence="1">Belongs to the PPR family. P subfamily.</text>
</comment>
<comment type="online information" name="Pentatricopeptide repeat proteins">
    <link uri="https://ppr.plantenergy.uwa.edu.au"/>
</comment>
<gene>
    <name type="ordered locus">At5g62370</name>
    <name type="ORF">MMI9.20</name>
</gene>
<evidence type="ECO:0000305" key="1"/>
<name>PP443_ARATH</name>
<protein>
    <recommendedName>
        <fullName>Pentatricopeptide repeat-containing protein At5g62370</fullName>
    </recommendedName>
</protein>
<dbReference type="EMBL" id="AB019235">
    <property type="protein sequence ID" value="BAA97201.1"/>
    <property type="molecule type" value="Genomic_DNA"/>
</dbReference>
<dbReference type="EMBL" id="CP002688">
    <property type="protein sequence ID" value="AED97601.1"/>
    <property type="molecule type" value="Genomic_DNA"/>
</dbReference>
<dbReference type="RefSeq" id="NP_201043.1">
    <property type="nucleotide sequence ID" value="NM_125631.2"/>
</dbReference>
<dbReference type="SMR" id="Q9LVA2"/>
<dbReference type="FunCoup" id="Q9LVA2">
    <property type="interactions" value="386"/>
</dbReference>
<dbReference type="iPTMnet" id="Q9LVA2"/>
<dbReference type="PaxDb" id="3702-AT5G62370.1"/>
<dbReference type="EnsemblPlants" id="AT5G62370.1">
    <property type="protein sequence ID" value="AT5G62370.1"/>
    <property type="gene ID" value="AT5G62370"/>
</dbReference>
<dbReference type="GeneID" id="836358"/>
<dbReference type="Gramene" id="AT5G62370.1">
    <property type="protein sequence ID" value="AT5G62370.1"/>
    <property type="gene ID" value="AT5G62370"/>
</dbReference>
<dbReference type="KEGG" id="ath:AT5G62370"/>
<dbReference type="Araport" id="AT5G62370"/>
<dbReference type="TAIR" id="AT5G62370"/>
<dbReference type="eggNOG" id="KOG4197">
    <property type="taxonomic scope" value="Eukaryota"/>
</dbReference>
<dbReference type="HOGENOM" id="CLU_002706_7_2_1"/>
<dbReference type="InParanoid" id="Q9LVA2"/>
<dbReference type="OMA" id="DAYAYTT"/>
<dbReference type="PhylomeDB" id="Q9LVA2"/>
<dbReference type="PRO" id="PR:Q9LVA2"/>
<dbReference type="Proteomes" id="UP000006548">
    <property type="component" value="Chromosome 5"/>
</dbReference>
<dbReference type="ExpressionAtlas" id="Q9LVA2">
    <property type="expression patterns" value="baseline and differential"/>
</dbReference>
<dbReference type="FunFam" id="1.25.40.10:FF:003729">
    <property type="entry name" value="Pentatricopeptide repeat-containing protein At5g62370"/>
    <property type="match status" value="2"/>
</dbReference>
<dbReference type="Gene3D" id="1.25.40.10">
    <property type="entry name" value="Tetratricopeptide repeat domain"/>
    <property type="match status" value="7"/>
</dbReference>
<dbReference type="InterPro" id="IPR002885">
    <property type="entry name" value="Pentatricopeptide_rpt"/>
</dbReference>
<dbReference type="InterPro" id="IPR050667">
    <property type="entry name" value="PPR-containing_protein"/>
</dbReference>
<dbReference type="InterPro" id="IPR011990">
    <property type="entry name" value="TPR-like_helical_dom_sf"/>
</dbReference>
<dbReference type="NCBIfam" id="TIGR00756">
    <property type="entry name" value="PPR"/>
    <property type="match status" value="11"/>
</dbReference>
<dbReference type="PANTHER" id="PTHR47939">
    <property type="entry name" value="MEMBRANE-ASSOCIATED SALT-INDUCIBLE PROTEIN-LIKE"/>
    <property type="match status" value="1"/>
</dbReference>
<dbReference type="PANTHER" id="PTHR47939:SF13">
    <property type="entry name" value="OS03G0201400 PROTEIN"/>
    <property type="match status" value="1"/>
</dbReference>
<dbReference type="Pfam" id="PF01535">
    <property type="entry name" value="PPR"/>
    <property type="match status" value="2"/>
</dbReference>
<dbReference type="Pfam" id="PF13041">
    <property type="entry name" value="PPR_2"/>
    <property type="match status" value="5"/>
</dbReference>
<dbReference type="Pfam" id="PF13812">
    <property type="entry name" value="PPR_3"/>
    <property type="match status" value="2"/>
</dbReference>
<dbReference type="SUPFAM" id="SSF81901">
    <property type="entry name" value="HCP-like"/>
    <property type="match status" value="1"/>
</dbReference>
<dbReference type="PROSITE" id="PS51375">
    <property type="entry name" value="PPR"/>
    <property type="match status" value="23"/>
</dbReference>
<sequence>MLKAKALCYRFFKSRKATTCALSSELFPSTSAAVFSAASGDHRSRCLSLIVKLGRRGLLDSAREVIRRVIDGSSSISEAALVADFAVDNGIELDSSCYGALIRKLTEMGQPGVAETFYNQRVIGNGIVPDSSVLDSMVFCLVKLRRFDEARAHLDRIIASGYAPSRNSSSLVVDELCNQDRFLEAFHCFEQVKERGSGLWLWCCKRLFKGLCGHGHLNEAIGMLDTLCGMTRMPLPVNLYKSLFYCFCKRGCAAEAEALFDHMEVDGYYVDKVMYTCLMKEYCKDNNMTMAMRLYLRMVERSFELDPCIFNTLIHGFMKLGMLDKGRVMFSQMIKKGVQSNVFTYHIMIGSYCKEGNVDYALRLFVNNTGSEDISRNVHCYTNLIFGFYKKGGMDKAVDLLMRMLDNGIVPDHITYFVLLKMLPKCHELKYAMVILQSILDNGCGINPPVIDDLGNIEVKVESLLGEIARKDANLAAVGLAVVTTALCSQRNYIAALSRIEKMVNLGCTPLPFSYNSVIKCLFQENIIEDLASLVNIIQELDFVPDVDTYLIVVNELCKKNDRDAAFAIIDAMEELGLRPTVAIYSSIIGSLGKQGRVVEAEETFAKMLESGIQPDEIAYMIMINTYARNGRIDEANELVEEVVKHFLRPSSFTYTVLISGFVKMGMMEKGCQYLDKMLEDGLSPNVVLYTALIGHFLKKGDFKFSFTLFGLMGENDIKHDHIAYITLLSGLWRAMARKKKRQVIVEPGKEKLLQRLIRTKPLVSIPSSLGNYGSKSFAMEVIGKVKKSIIPNLYLHNTIITGYCAAGRLDEAYNHLESMQKEGIVPNLVTYTILMKSHIEAGDIESAIDLFEGTNCEPDQVMYSTLLKGLCDFKRPLDALALMLEMQKSGINPNKDSYEKLLQCLCYSRLTMEAVKVVKDMAALDIWPRSINHTWLIYILCEEKKLREARALFAIMVQSGRSLLNCTKPGLLKMLNQNQQL</sequence>
<reference key="1">
    <citation type="journal article" date="2000" name="DNA Res.">
        <title>Structural analysis of Arabidopsis thaliana chromosome 5. X. Sequence features of the regions of 3,076,755 bp covered by sixty P1 and TAC clones.</title>
        <authorList>
            <person name="Sato S."/>
            <person name="Nakamura Y."/>
            <person name="Kaneko T."/>
            <person name="Katoh T."/>
            <person name="Asamizu E."/>
            <person name="Kotani H."/>
            <person name="Tabata S."/>
        </authorList>
    </citation>
    <scope>NUCLEOTIDE SEQUENCE [LARGE SCALE GENOMIC DNA]</scope>
    <source>
        <strain>cv. Columbia</strain>
    </source>
</reference>
<reference key="2">
    <citation type="journal article" date="2017" name="Plant J.">
        <title>Araport11: a complete reannotation of the Arabidopsis thaliana reference genome.</title>
        <authorList>
            <person name="Cheng C.Y."/>
            <person name="Krishnakumar V."/>
            <person name="Chan A.P."/>
            <person name="Thibaud-Nissen F."/>
            <person name="Schobel S."/>
            <person name="Town C.D."/>
        </authorList>
    </citation>
    <scope>GENOME REANNOTATION</scope>
    <source>
        <strain>cv. Columbia</strain>
    </source>
</reference>
<reference key="3">
    <citation type="journal article" date="2004" name="Plant Cell">
        <title>Genome-wide analysis of Arabidopsis pentatricopeptide repeat proteins reveals their essential role in organelle biogenesis.</title>
        <authorList>
            <person name="Lurin C."/>
            <person name="Andres C."/>
            <person name="Aubourg S."/>
            <person name="Bellaoui M."/>
            <person name="Bitton F."/>
            <person name="Bruyere C."/>
            <person name="Caboche M."/>
            <person name="Debast C."/>
            <person name="Gualberto J."/>
            <person name="Hoffmann B."/>
            <person name="Lecharny A."/>
            <person name="Le Ret M."/>
            <person name="Martin-Magniette M.-L."/>
            <person name="Mireau H."/>
            <person name="Peeters N."/>
            <person name="Renou J.-P."/>
            <person name="Szurek B."/>
            <person name="Taconnat L."/>
            <person name="Small I."/>
        </authorList>
    </citation>
    <scope>GENE FAMILY</scope>
</reference>
<organism>
    <name type="scientific">Arabidopsis thaliana</name>
    <name type="common">Mouse-ear cress</name>
    <dbReference type="NCBI Taxonomy" id="3702"/>
    <lineage>
        <taxon>Eukaryota</taxon>
        <taxon>Viridiplantae</taxon>
        <taxon>Streptophyta</taxon>
        <taxon>Embryophyta</taxon>
        <taxon>Tracheophyta</taxon>
        <taxon>Spermatophyta</taxon>
        <taxon>Magnoliopsida</taxon>
        <taxon>eudicotyledons</taxon>
        <taxon>Gunneridae</taxon>
        <taxon>Pentapetalae</taxon>
        <taxon>rosids</taxon>
        <taxon>malvids</taxon>
        <taxon>Brassicales</taxon>
        <taxon>Brassicaceae</taxon>
        <taxon>Camelineae</taxon>
        <taxon>Arabidopsis</taxon>
    </lineage>
</organism>
<feature type="chain" id="PRO_0000363580" description="Pentatricopeptide repeat-containing protein At5g62370">
    <location>
        <begin position="1"/>
        <end position="982"/>
    </location>
</feature>
<feature type="repeat" description="PPR 1">
    <location>
        <begin position="94"/>
        <end position="129"/>
    </location>
</feature>
<feature type="repeat" description="PPR 2">
    <location>
        <begin position="130"/>
        <end position="164"/>
    </location>
</feature>
<feature type="repeat" description="PPR 3">
    <location>
        <begin position="165"/>
        <end position="199"/>
    </location>
</feature>
<feature type="repeat" description="PPR 4">
    <location>
        <begin position="200"/>
        <end position="234"/>
    </location>
</feature>
<feature type="repeat" description="PPR 5">
    <location>
        <begin position="236"/>
        <end position="270"/>
    </location>
</feature>
<feature type="repeat" description="PPR 6">
    <location>
        <begin position="271"/>
        <end position="305"/>
    </location>
</feature>
<feature type="repeat" description="PPR 7">
    <location>
        <begin position="306"/>
        <end position="340"/>
    </location>
</feature>
<feature type="repeat" description="PPR 8">
    <location>
        <begin position="341"/>
        <end position="376"/>
    </location>
</feature>
<feature type="repeat" description="PPR 9">
    <location>
        <begin position="377"/>
        <end position="411"/>
    </location>
</feature>
<feature type="repeat" description="PPR 10">
    <location>
        <begin position="412"/>
        <end position="446"/>
    </location>
</feature>
<feature type="repeat" description="PPR 11">
    <location>
        <begin position="476"/>
        <end position="510"/>
    </location>
</feature>
<feature type="repeat" description="PPR 12">
    <location>
        <begin position="511"/>
        <end position="545"/>
    </location>
</feature>
<feature type="repeat" description="PPR 13">
    <location>
        <begin position="546"/>
        <end position="580"/>
    </location>
</feature>
<feature type="repeat" description="PPR 14">
    <location>
        <begin position="581"/>
        <end position="615"/>
    </location>
</feature>
<feature type="repeat" description="PPR 15">
    <location>
        <begin position="616"/>
        <end position="650"/>
    </location>
</feature>
<feature type="repeat" description="PPR 16">
    <location>
        <begin position="651"/>
        <end position="685"/>
    </location>
</feature>
<feature type="repeat" description="PPR 17">
    <location>
        <begin position="686"/>
        <end position="720"/>
    </location>
</feature>
<feature type="repeat" description="PPR 18">
    <location>
        <begin position="721"/>
        <end position="755"/>
    </location>
</feature>
<feature type="repeat" description="PPR 19">
    <location>
        <begin position="759"/>
        <end position="789"/>
    </location>
</feature>
<feature type="repeat" description="PPR 20">
    <location>
        <begin position="793"/>
        <end position="827"/>
    </location>
</feature>
<feature type="repeat" description="PPR 21">
    <location>
        <begin position="828"/>
        <end position="858"/>
    </location>
</feature>
<feature type="repeat" description="PPR 22">
    <location>
        <begin position="860"/>
        <end position="894"/>
    </location>
</feature>
<feature type="repeat" description="PPR 23">
    <location>
        <begin position="895"/>
        <end position="929"/>
    </location>
</feature>
<feature type="repeat" description="PPR 24">
    <location>
        <begin position="930"/>
        <end position="964"/>
    </location>
</feature>
<proteinExistence type="evidence at transcript level"/>
<keyword id="KW-1185">Reference proteome</keyword>
<keyword id="KW-0677">Repeat</keyword>
<accession>Q9LVA2</accession>